<accession>O84250</accession>
<dbReference type="EC" id="2.4.1.1"/>
<dbReference type="EMBL" id="AE001273">
    <property type="protein sequence ID" value="AAC67841.1"/>
    <property type="molecule type" value="Genomic_DNA"/>
</dbReference>
<dbReference type="PIR" id="A71540">
    <property type="entry name" value="A71540"/>
</dbReference>
<dbReference type="RefSeq" id="NP_219753.1">
    <property type="nucleotide sequence ID" value="NC_000117.1"/>
</dbReference>
<dbReference type="RefSeq" id="WP_010725136.1">
    <property type="nucleotide sequence ID" value="NC_000117.1"/>
</dbReference>
<dbReference type="SMR" id="O84250"/>
<dbReference type="FunCoup" id="O84250">
    <property type="interactions" value="183"/>
</dbReference>
<dbReference type="STRING" id="272561.CT_248"/>
<dbReference type="CAZy" id="GT35">
    <property type="family name" value="Glycosyltransferase Family 35"/>
</dbReference>
<dbReference type="EnsemblBacteria" id="AAC67841">
    <property type="protein sequence ID" value="AAC67841"/>
    <property type="gene ID" value="CT_248"/>
</dbReference>
<dbReference type="GeneID" id="884873"/>
<dbReference type="KEGG" id="ctr:CT_248"/>
<dbReference type="PATRIC" id="fig|272561.5.peg.265"/>
<dbReference type="HOGENOM" id="CLU_010198_1_1_0"/>
<dbReference type="InParanoid" id="O84250"/>
<dbReference type="OrthoDB" id="9760804at2"/>
<dbReference type="Proteomes" id="UP000000431">
    <property type="component" value="Chromosome"/>
</dbReference>
<dbReference type="GO" id="GO:0005737">
    <property type="term" value="C:cytoplasm"/>
    <property type="evidence" value="ECO:0000318"/>
    <property type="project" value="GO_Central"/>
</dbReference>
<dbReference type="GO" id="GO:0008184">
    <property type="term" value="F:glycogen phosphorylase activity"/>
    <property type="evidence" value="ECO:0000318"/>
    <property type="project" value="GO_Central"/>
</dbReference>
<dbReference type="GO" id="GO:0030170">
    <property type="term" value="F:pyridoxal phosphate binding"/>
    <property type="evidence" value="ECO:0000318"/>
    <property type="project" value="GO_Central"/>
</dbReference>
<dbReference type="GO" id="GO:0005980">
    <property type="term" value="P:glycogen catabolic process"/>
    <property type="evidence" value="ECO:0000318"/>
    <property type="project" value="GO_Central"/>
</dbReference>
<dbReference type="CDD" id="cd04300">
    <property type="entry name" value="GT35_Glycogen_Phosphorylase"/>
    <property type="match status" value="1"/>
</dbReference>
<dbReference type="FunFam" id="3.40.50.2000:FF:000002">
    <property type="entry name" value="Alpha-1,4 glucan phosphorylase"/>
    <property type="match status" value="1"/>
</dbReference>
<dbReference type="FunFam" id="3.40.50.2000:FF:000003">
    <property type="entry name" value="Alpha-1,4 glucan phosphorylase"/>
    <property type="match status" value="1"/>
</dbReference>
<dbReference type="Gene3D" id="3.40.50.2000">
    <property type="entry name" value="Glycogen Phosphorylase B"/>
    <property type="match status" value="2"/>
</dbReference>
<dbReference type="InterPro" id="IPR011833">
    <property type="entry name" value="Glycg_phsphrylas"/>
</dbReference>
<dbReference type="InterPro" id="IPR000811">
    <property type="entry name" value="Glyco_trans_35"/>
</dbReference>
<dbReference type="InterPro" id="IPR035090">
    <property type="entry name" value="Pyridoxal_P_attach_site"/>
</dbReference>
<dbReference type="NCBIfam" id="TIGR02093">
    <property type="entry name" value="P_ylase"/>
    <property type="match status" value="1"/>
</dbReference>
<dbReference type="PANTHER" id="PTHR11468">
    <property type="entry name" value="GLYCOGEN PHOSPHORYLASE"/>
    <property type="match status" value="1"/>
</dbReference>
<dbReference type="PANTHER" id="PTHR11468:SF3">
    <property type="entry name" value="GLYCOGEN PHOSPHORYLASE, LIVER FORM"/>
    <property type="match status" value="1"/>
</dbReference>
<dbReference type="Pfam" id="PF00343">
    <property type="entry name" value="Phosphorylase"/>
    <property type="match status" value="1"/>
</dbReference>
<dbReference type="PIRSF" id="PIRSF000460">
    <property type="entry name" value="Pprylas_GlgP"/>
    <property type="match status" value="1"/>
</dbReference>
<dbReference type="SUPFAM" id="SSF53756">
    <property type="entry name" value="UDP-Glycosyltransferase/glycogen phosphorylase"/>
    <property type="match status" value="1"/>
</dbReference>
<dbReference type="PROSITE" id="PS00102">
    <property type="entry name" value="PHOSPHORYLASE"/>
    <property type="match status" value="1"/>
</dbReference>
<reference key="1">
    <citation type="journal article" date="1998" name="Science">
        <title>Genome sequence of an obligate intracellular pathogen of humans: Chlamydia trachomatis.</title>
        <authorList>
            <person name="Stephens R.S."/>
            <person name="Kalman S."/>
            <person name="Lammel C.J."/>
            <person name="Fan J."/>
            <person name="Marathe R."/>
            <person name="Aravind L."/>
            <person name="Mitchell W.P."/>
            <person name="Olinger L."/>
            <person name="Tatusov R.L."/>
            <person name="Zhao Q."/>
            <person name="Koonin E.V."/>
            <person name="Davis R.W."/>
        </authorList>
    </citation>
    <scope>NUCLEOTIDE SEQUENCE [LARGE SCALE GENOMIC DNA]</scope>
    <source>
        <strain>ATCC VR-885 / DSM 19411 / UW-3/Cx</strain>
    </source>
</reference>
<keyword id="KW-0021">Allosteric enzyme</keyword>
<keyword id="KW-0119">Carbohydrate metabolism</keyword>
<keyword id="KW-0321">Glycogen metabolism</keyword>
<keyword id="KW-0328">Glycosyltransferase</keyword>
<keyword id="KW-0663">Pyridoxal phosphate</keyword>
<keyword id="KW-1185">Reference proteome</keyword>
<keyword id="KW-0808">Transferase</keyword>
<proteinExistence type="inferred from homology"/>
<evidence type="ECO:0000250" key="1"/>
<evidence type="ECO:0000305" key="2"/>
<organism>
    <name type="scientific">Chlamydia trachomatis serovar D (strain ATCC VR-885 / DSM 19411 / UW-3/Cx)</name>
    <dbReference type="NCBI Taxonomy" id="272561"/>
    <lineage>
        <taxon>Bacteria</taxon>
        <taxon>Pseudomonadati</taxon>
        <taxon>Chlamydiota</taxon>
        <taxon>Chlamydiia</taxon>
        <taxon>Chlamydiales</taxon>
        <taxon>Chlamydiaceae</taxon>
        <taxon>Chlamydia/Chlamydophila group</taxon>
        <taxon>Chlamydia</taxon>
    </lineage>
</organism>
<name>PHSG_CHLTR</name>
<comment type="function">
    <text evidence="1">Phosphorylase is an important allosteric enzyme in carbohydrate metabolism. Enzymes from different sources differ in their regulatory mechanisms and in their natural substrates. However, all known phosphorylases share catalytic and structural properties (By similarity).</text>
</comment>
<comment type="catalytic activity">
    <reaction>
        <text>[(1-&gt;4)-alpha-D-glucosyl](n) + phosphate = [(1-&gt;4)-alpha-D-glucosyl](n-1) + alpha-D-glucose 1-phosphate</text>
        <dbReference type="Rhea" id="RHEA:41732"/>
        <dbReference type="Rhea" id="RHEA-COMP:9584"/>
        <dbReference type="Rhea" id="RHEA-COMP:9586"/>
        <dbReference type="ChEBI" id="CHEBI:15444"/>
        <dbReference type="ChEBI" id="CHEBI:43474"/>
        <dbReference type="ChEBI" id="CHEBI:58601"/>
        <dbReference type="EC" id="2.4.1.1"/>
    </reaction>
</comment>
<comment type="cofactor">
    <cofactor evidence="1">
        <name>pyridoxal 5'-phosphate</name>
        <dbReference type="ChEBI" id="CHEBI:597326"/>
    </cofactor>
</comment>
<comment type="similarity">
    <text evidence="2">Belongs to the glycogen phosphorylase family.</text>
</comment>
<gene>
    <name type="primary">glgP</name>
    <name type="ordered locus">CT_248</name>
</gene>
<sequence>MYFDRTKINVESMKQAILERVYCGVVQTPQSASTRDIFTAVAKTVLEWMAKGWLKTQSSYYDNDVKRVYYISMEFLLGRSLKSNLLNLGLLDLVKEALFDLGYDFDQLVEMEHDAGLGNGGLGRLAACFLDSMATLEIPAYGYGLRYDYGIFDQKIENGFQVESPDEWLRYGNPWEICRGEYLYPVHFYGKVKHSIDSRGRDVAELVDSQEVLAMAYDVPVPGFNNDAVNSLRLWQAQSRHGFEFSYFNHGNYIRAIEDIALAGNITRVLYPNDSISEGQELRLKQEYFLVSATIQDILRRYTKTHLSLDKLSEKVSVQLNDTHPALGIAEMMRLLVDREELDWDVAWDATTKIFNYTNHTILPEALERWSLDLFSKVLPRHLEIIYEINARWLAKVSQKYPGDNDKRRALSIIEEGSSKFVNMANLAVVGTNKVNGVSTFHSQLIKSTLFKDFVEFFPDKFINVTNGITPRRWLALSNKKLSSLLNRTIGTEYLTNLTHLHKVIPLAEDSGFREEWRNIKIQNKEELAARIYKELGVTVNPQSIFDCHIKRIHEYKRQLMNILRVIYFYNEIRNGSGEIVPTTVIFGGKAAPGYAMAKLIIKLINNVAAVVNNDPKVNDQLKVIFWPNYRVSLAEAIIPATDLSEQISTAGMEASGTGNMKFALNGALTIGTMDGANIEMAEHIGKEHMFIFGLLEEEISELRKEYYPQGICNANPTIQEILDMIAQAKFSQEDKDLFKPIVNRLLNEGDPFFVLADLEAYINTQNRVASLFKQPEEWTKKSIYNVGGIGFFSSDRSIAEYASNIWNVSRPTS</sequence>
<feature type="chain" id="PRO_0000188552" description="Glycogen phosphorylase">
    <location>
        <begin position="1"/>
        <end position="814"/>
    </location>
</feature>
<feature type="modified residue" description="N6-(pyridoxal phosphate)lysine" evidence="1">
    <location>
        <position position="662"/>
    </location>
</feature>
<protein>
    <recommendedName>
        <fullName>Glycogen phosphorylase</fullName>
        <ecNumber>2.4.1.1</ecNumber>
    </recommendedName>
</protein>